<protein>
    <recommendedName>
        <fullName evidence="9">Transcriptional adapter 1-2</fullName>
    </recommendedName>
</protein>
<accession>Q8IPA1</accession>
<keyword id="KW-0539">Nucleus</keyword>
<keyword id="KW-1185">Reference proteome</keyword>
<keyword id="KW-0804">Transcription</keyword>
<keyword id="KW-0805">Transcription regulation</keyword>
<name>TAD12_DROME</name>
<feature type="chain" id="PRO_0000462581" description="Transcriptional adapter 1-2">
    <location>
        <begin position="1"/>
        <end position="308"/>
    </location>
</feature>
<dbReference type="EMBL" id="AE014134">
    <property type="protein sequence ID" value="AAN10793.1"/>
    <property type="molecule type" value="Genomic_DNA"/>
</dbReference>
<dbReference type="EMBL" id="BT015976">
    <property type="protein sequence ID" value="AAV36861.1"/>
    <property type="molecule type" value="mRNA"/>
</dbReference>
<dbReference type="RefSeq" id="NP_723703.1">
    <property type="nucleotide sequence ID" value="NM_164980.3"/>
</dbReference>
<dbReference type="ComplexPortal" id="CPX-2644">
    <property type="entry name" value="SAGA complex"/>
</dbReference>
<dbReference type="FunCoup" id="Q8IPA1">
    <property type="interactions" value="775"/>
</dbReference>
<dbReference type="IntAct" id="Q8IPA1">
    <property type="interactions" value="1"/>
</dbReference>
<dbReference type="STRING" id="7227.FBpp0079871"/>
<dbReference type="PaxDb" id="7227-FBpp0079871"/>
<dbReference type="DNASU" id="318992"/>
<dbReference type="EnsemblMetazoa" id="FBtr0080287">
    <property type="protein sequence ID" value="FBpp0079871"/>
    <property type="gene ID" value="FBgn0051866"/>
</dbReference>
<dbReference type="GeneID" id="318992"/>
<dbReference type="KEGG" id="dme:Dmel_CG31866"/>
<dbReference type="UCSC" id="CG31866-RA">
    <property type="organism name" value="d. melanogaster"/>
</dbReference>
<dbReference type="AGR" id="FB:FBgn0051866"/>
<dbReference type="CTD" id="318992"/>
<dbReference type="FlyBase" id="FBgn0051866">
    <property type="gene designation" value="Ada1-2"/>
</dbReference>
<dbReference type="VEuPathDB" id="VectorBase:FBgn0051866"/>
<dbReference type="eggNOG" id="ENOG502QRMT">
    <property type="taxonomic scope" value="Eukaryota"/>
</dbReference>
<dbReference type="GeneTree" id="ENSGT00390000011644"/>
<dbReference type="HOGENOM" id="CLU_071612_0_0_1"/>
<dbReference type="InParanoid" id="Q8IPA1"/>
<dbReference type="OMA" id="NIMTEDQ"/>
<dbReference type="OrthoDB" id="10264870at2759"/>
<dbReference type="BioGRID-ORCS" id="318992">
    <property type="hits" value="0 hits in 1 CRISPR screen"/>
</dbReference>
<dbReference type="Proteomes" id="UP000000803">
    <property type="component" value="Chromosome 2L"/>
</dbReference>
<dbReference type="Bgee" id="FBgn0051866">
    <property type="expression patterns" value="Expressed in T neuron T5b (Drosophila) in embryonic/larval optic lobe (Drosophila) and 20 other cell types or tissues"/>
</dbReference>
<dbReference type="ExpressionAtlas" id="Q8IPA1">
    <property type="expression patterns" value="baseline and differential"/>
</dbReference>
<dbReference type="GO" id="GO:0005634">
    <property type="term" value="C:nucleus"/>
    <property type="evidence" value="ECO:0000314"/>
    <property type="project" value="FlyBase"/>
</dbReference>
<dbReference type="GO" id="GO:0000124">
    <property type="term" value="C:SAGA complex"/>
    <property type="evidence" value="ECO:0000314"/>
    <property type="project" value="FlyBase"/>
</dbReference>
<dbReference type="GO" id="GO:0003713">
    <property type="term" value="F:transcription coactivator activity"/>
    <property type="evidence" value="ECO:0000250"/>
    <property type="project" value="FlyBase"/>
</dbReference>
<dbReference type="GO" id="GO:0006357">
    <property type="term" value="P:regulation of transcription by RNA polymerase II"/>
    <property type="evidence" value="ECO:0000318"/>
    <property type="project" value="GO_Central"/>
</dbReference>
<dbReference type="CDD" id="cd22934">
    <property type="entry name" value="HFD_TADA1"/>
    <property type="match status" value="1"/>
</dbReference>
<dbReference type="InterPro" id="IPR024738">
    <property type="entry name" value="Hfi1/Tada1"/>
</dbReference>
<dbReference type="PANTHER" id="PTHR21277">
    <property type="entry name" value="TRANSCRIPTIONAL ADAPTER 1"/>
    <property type="match status" value="1"/>
</dbReference>
<dbReference type="PANTHER" id="PTHR21277:SF5">
    <property type="entry name" value="TRANSCRIPTIONAL ADAPTER 1"/>
    <property type="match status" value="1"/>
</dbReference>
<dbReference type="Pfam" id="PF12767">
    <property type="entry name" value="SAGA-Tad1"/>
    <property type="match status" value="1"/>
</dbReference>
<reference evidence="10" key="1">
    <citation type="journal article" date="2000" name="Science">
        <title>The genome sequence of Drosophila melanogaster.</title>
        <authorList>
            <person name="Adams M.D."/>
            <person name="Celniker S.E."/>
            <person name="Holt R.A."/>
            <person name="Evans C.A."/>
            <person name="Gocayne J.D."/>
            <person name="Amanatides P.G."/>
            <person name="Scherer S.E."/>
            <person name="Li P.W."/>
            <person name="Hoskins R.A."/>
            <person name="Galle R.F."/>
            <person name="George R.A."/>
            <person name="Lewis S.E."/>
            <person name="Richards S."/>
            <person name="Ashburner M."/>
            <person name="Henderson S.N."/>
            <person name="Sutton G.G."/>
            <person name="Wortman J.R."/>
            <person name="Yandell M.D."/>
            <person name="Zhang Q."/>
            <person name="Chen L.X."/>
            <person name="Brandon R.C."/>
            <person name="Rogers Y.-H.C."/>
            <person name="Blazej R.G."/>
            <person name="Champe M."/>
            <person name="Pfeiffer B.D."/>
            <person name="Wan K.H."/>
            <person name="Doyle C."/>
            <person name="Baxter E.G."/>
            <person name="Helt G."/>
            <person name="Nelson C.R."/>
            <person name="Miklos G.L.G."/>
            <person name="Abril J.F."/>
            <person name="Agbayani A."/>
            <person name="An H.-J."/>
            <person name="Andrews-Pfannkoch C."/>
            <person name="Baldwin D."/>
            <person name="Ballew R.M."/>
            <person name="Basu A."/>
            <person name="Baxendale J."/>
            <person name="Bayraktaroglu L."/>
            <person name="Beasley E.M."/>
            <person name="Beeson K.Y."/>
            <person name="Benos P.V."/>
            <person name="Berman B.P."/>
            <person name="Bhandari D."/>
            <person name="Bolshakov S."/>
            <person name="Borkova D."/>
            <person name="Botchan M.R."/>
            <person name="Bouck J."/>
            <person name="Brokstein P."/>
            <person name="Brottier P."/>
            <person name="Burtis K.C."/>
            <person name="Busam D.A."/>
            <person name="Butler H."/>
            <person name="Cadieu E."/>
            <person name="Center A."/>
            <person name="Chandra I."/>
            <person name="Cherry J.M."/>
            <person name="Cawley S."/>
            <person name="Dahlke C."/>
            <person name="Davenport L.B."/>
            <person name="Davies P."/>
            <person name="de Pablos B."/>
            <person name="Delcher A."/>
            <person name="Deng Z."/>
            <person name="Mays A.D."/>
            <person name="Dew I."/>
            <person name="Dietz S.M."/>
            <person name="Dodson K."/>
            <person name="Doup L.E."/>
            <person name="Downes M."/>
            <person name="Dugan-Rocha S."/>
            <person name="Dunkov B.C."/>
            <person name="Dunn P."/>
            <person name="Durbin K.J."/>
            <person name="Evangelista C.C."/>
            <person name="Ferraz C."/>
            <person name="Ferriera S."/>
            <person name="Fleischmann W."/>
            <person name="Fosler C."/>
            <person name="Gabrielian A.E."/>
            <person name="Garg N.S."/>
            <person name="Gelbart W.M."/>
            <person name="Glasser K."/>
            <person name="Glodek A."/>
            <person name="Gong F."/>
            <person name="Gorrell J.H."/>
            <person name="Gu Z."/>
            <person name="Guan P."/>
            <person name="Harris M."/>
            <person name="Harris N.L."/>
            <person name="Harvey D.A."/>
            <person name="Heiman T.J."/>
            <person name="Hernandez J.R."/>
            <person name="Houck J."/>
            <person name="Hostin D."/>
            <person name="Houston K.A."/>
            <person name="Howland T.J."/>
            <person name="Wei M.-H."/>
            <person name="Ibegwam C."/>
            <person name="Jalali M."/>
            <person name="Kalush F."/>
            <person name="Karpen G.H."/>
            <person name="Ke Z."/>
            <person name="Kennison J.A."/>
            <person name="Ketchum K.A."/>
            <person name="Kimmel B.E."/>
            <person name="Kodira C.D."/>
            <person name="Kraft C.L."/>
            <person name="Kravitz S."/>
            <person name="Kulp D."/>
            <person name="Lai Z."/>
            <person name="Lasko P."/>
            <person name="Lei Y."/>
            <person name="Levitsky A.A."/>
            <person name="Li J.H."/>
            <person name="Li Z."/>
            <person name="Liang Y."/>
            <person name="Lin X."/>
            <person name="Liu X."/>
            <person name="Mattei B."/>
            <person name="McIntosh T.C."/>
            <person name="McLeod M.P."/>
            <person name="McPherson D."/>
            <person name="Merkulov G."/>
            <person name="Milshina N.V."/>
            <person name="Mobarry C."/>
            <person name="Morris J."/>
            <person name="Moshrefi A."/>
            <person name="Mount S.M."/>
            <person name="Moy M."/>
            <person name="Murphy B."/>
            <person name="Murphy L."/>
            <person name="Muzny D.M."/>
            <person name="Nelson D.L."/>
            <person name="Nelson D.R."/>
            <person name="Nelson K.A."/>
            <person name="Nixon K."/>
            <person name="Nusskern D.R."/>
            <person name="Pacleb J.M."/>
            <person name="Palazzolo M."/>
            <person name="Pittman G.S."/>
            <person name="Pan S."/>
            <person name="Pollard J."/>
            <person name="Puri V."/>
            <person name="Reese M.G."/>
            <person name="Reinert K."/>
            <person name="Remington K."/>
            <person name="Saunders R.D.C."/>
            <person name="Scheeler F."/>
            <person name="Shen H."/>
            <person name="Shue B.C."/>
            <person name="Siden-Kiamos I."/>
            <person name="Simpson M."/>
            <person name="Skupski M.P."/>
            <person name="Smith T.J."/>
            <person name="Spier E."/>
            <person name="Spradling A.C."/>
            <person name="Stapleton M."/>
            <person name="Strong R."/>
            <person name="Sun E."/>
            <person name="Svirskas R."/>
            <person name="Tector C."/>
            <person name="Turner R."/>
            <person name="Venter E."/>
            <person name="Wang A.H."/>
            <person name="Wang X."/>
            <person name="Wang Z.-Y."/>
            <person name="Wassarman D.A."/>
            <person name="Weinstock G.M."/>
            <person name="Weissenbach J."/>
            <person name="Williams S.M."/>
            <person name="Woodage T."/>
            <person name="Worley K.C."/>
            <person name="Wu D."/>
            <person name="Yang S."/>
            <person name="Yao Q.A."/>
            <person name="Ye J."/>
            <person name="Yeh R.-F."/>
            <person name="Zaveri J.S."/>
            <person name="Zhan M."/>
            <person name="Zhang G."/>
            <person name="Zhao Q."/>
            <person name="Zheng L."/>
            <person name="Zheng X.H."/>
            <person name="Zhong F.N."/>
            <person name="Zhong W."/>
            <person name="Zhou X."/>
            <person name="Zhu S.C."/>
            <person name="Zhu X."/>
            <person name="Smith H.O."/>
            <person name="Gibbs R.A."/>
            <person name="Myers E.W."/>
            <person name="Rubin G.M."/>
            <person name="Venter J.C."/>
        </authorList>
    </citation>
    <scope>NUCLEOTIDE SEQUENCE [LARGE SCALE GENOMIC DNA]</scope>
    <source>
        <strain evidence="10">Berkeley</strain>
    </source>
</reference>
<reference evidence="10" key="2">
    <citation type="journal article" date="2002" name="Genome Biol.">
        <title>Annotation of the Drosophila melanogaster euchromatic genome: a systematic review.</title>
        <authorList>
            <person name="Misra S."/>
            <person name="Crosby M.A."/>
            <person name="Mungall C.J."/>
            <person name="Matthews B.B."/>
            <person name="Campbell K.S."/>
            <person name="Hradecky P."/>
            <person name="Huang Y."/>
            <person name="Kaminker J.S."/>
            <person name="Millburn G.H."/>
            <person name="Prochnik S.E."/>
            <person name="Smith C.D."/>
            <person name="Tupy J.L."/>
            <person name="Whitfield E.J."/>
            <person name="Bayraktaroglu L."/>
            <person name="Berman B.P."/>
            <person name="Bettencourt B.R."/>
            <person name="Celniker S.E."/>
            <person name="de Grey A.D.N.J."/>
            <person name="Drysdale R.A."/>
            <person name="Harris N.L."/>
            <person name="Richter J."/>
            <person name="Russo S."/>
            <person name="Schroeder A.J."/>
            <person name="Shu S.Q."/>
            <person name="Stapleton M."/>
            <person name="Yamada C."/>
            <person name="Ashburner M."/>
            <person name="Gelbart W.M."/>
            <person name="Rubin G.M."/>
            <person name="Lewis S.E."/>
        </authorList>
    </citation>
    <scope>GENOME REANNOTATION</scope>
    <source>
        <strain evidence="10">Berkeley</strain>
    </source>
</reference>
<reference evidence="8" key="3">
    <citation type="submission" date="2004-10" db="EMBL/GenBank/DDBJ databases">
        <authorList>
            <person name="Stapleton M."/>
            <person name="Carlson J."/>
            <person name="Chavez C."/>
            <person name="Frise E."/>
            <person name="George R."/>
            <person name="Pacleb J."/>
            <person name="Park S."/>
            <person name="Wan K."/>
            <person name="Yu C."/>
            <person name="Rubin G.M."/>
            <person name="Celniker S."/>
        </authorList>
    </citation>
    <scope>NUCLEOTIDE SEQUENCE [LARGE SCALE MRNA]</scope>
    <source>
        <strain evidence="8">Berkeley</strain>
    </source>
</reference>
<reference evidence="6" key="4">
    <citation type="journal article" date="2006" name="Mol. Cell. Biol.">
        <title>The essential gene wda encodes a WD40 repeat subunit of Drosophila SAGA required for histone H3 acetylation.</title>
        <authorList>
            <person name="Guelman S."/>
            <person name="Suganuma T."/>
            <person name="Florens L."/>
            <person name="Weake V."/>
            <person name="Swanson S.K."/>
            <person name="Washburn M.P."/>
            <person name="Abmayr S.M."/>
            <person name="Workman J.L."/>
        </authorList>
    </citation>
    <scope>FUNCTION</scope>
    <scope>IDENTIFICATION IN SAGA COMPLEX</scope>
    <scope>INTERACTION WITH GCN5; SPT3 AND ADA2B</scope>
    <scope>IDENTIFICATION BY MASS SPECTROMETRY</scope>
</reference>
<reference evidence="6" key="5">
    <citation type="journal article" date="2011" name="Genes Dev.">
        <title>Post-transcription initiation function of the ubiquitous SAGA complex in tissue-specific gene activation.</title>
        <authorList>
            <person name="Weake V.M."/>
            <person name="Dyer J.O."/>
            <person name="Seidel C."/>
            <person name="Box A."/>
            <person name="Swanson S.K."/>
            <person name="Peak A."/>
            <person name="Florens L."/>
            <person name="Washburn M.P."/>
            <person name="Abmayr S.M."/>
            <person name="Workman J.L."/>
        </authorList>
    </citation>
    <scope>FUNCTION</scope>
    <scope>IDENTIFICATION IN SAGA COMPLEX</scope>
    <scope>DEVELOPMENTAL STAGE</scope>
    <scope>IDENTIFICATION BY MASS SPECTROMETRY</scope>
</reference>
<reference evidence="6" key="6">
    <citation type="journal article" date="2014" name="Genes Dev.">
        <title>Loss of Drosophila Ataxin-7, a SAGA subunit, reduces H2B ubiquitination and leads to neural and retinal degeneration.</title>
        <authorList>
            <person name="Mohan R.D."/>
            <person name="Dialynas G."/>
            <person name="Weake V.M."/>
            <person name="Liu J."/>
            <person name="Martin-Brown S."/>
            <person name="Florens L."/>
            <person name="Washburn M.P."/>
            <person name="Workman J.L."/>
            <person name="Abmayr S.M."/>
        </authorList>
    </citation>
    <scope>FUNCTION</scope>
    <scope>IDENTIFICATION IN THE SAGA COMPLEX</scope>
    <scope>SUBCELLULAR LOCATION</scope>
    <scope>IDENTIFICATION BY MASS SPECTROMETRY</scope>
</reference>
<reference evidence="6" key="7">
    <citation type="journal article" date="2019" name="J. Cell Sci.">
        <title>The Drosophila Dbf4 ortholog Chiffon forms a complex with Gcn5 that is necessary for histone acetylation and viability.</title>
        <authorList>
            <person name="Torres-Zelada E.F."/>
            <person name="Stephenson R.E."/>
            <person name="Alpsoy A."/>
            <person name="Anderson B.D."/>
            <person name="Swanson S.K."/>
            <person name="Florens L."/>
            <person name="Dykhuizen E.C."/>
            <person name="Washburn M.P."/>
            <person name="Weake V.M."/>
        </authorList>
    </citation>
    <scope>FUNCTION</scope>
    <scope>IDENTIFICATION IN SAGA COMPLEX</scope>
    <scope>IDENTIFICATION BY MASS SPECTROMETRY</scope>
</reference>
<evidence type="ECO:0000269" key="1">
    <source>
    </source>
</evidence>
<evidence type="ECO:0000269" key="2">
    <source>
    </source>
</evidence>
<evidence type="ECO:0000269" key="3">
    <source>
    </source>
</evidence>
<evidence type="ECO:0000269" key="4">
    <source>
    </source>
</evidence>
<evidence type="ECO:0000303" key="5">
    <source>
    </source>
</evidence>
<evidence type="ECO:0000305" key="6"/>
<evidence type="ECO:0000312" key="7">
    <source>
        <dbReference type="EMBL" id="AAN10793.1"/>
    </source>
</evidence>
<evidence type="ECO:0000312" key="8">
    <source>
        <dbReference type="EMBL" id="AAV36861.1"/>
    </source>
</evidence>
<evidence type="ECO:0000312" key="9">
    <source>
        <dbReference type="FlyBase" id="FBgn0051866"/>
    </source>
</evidence>
<evidence type="ECO:0000312" key="10">
    <source>
        <dbReference type="Proteomes" id="UP000000803"/>
    </source>
</evidence>
<organism evidence="10">
    <name type="scientific">Drosophila melanogaster</name>
    <name type="common">Fruit fly</name>
    <dbReference type="NCBI Taxonomy" id="7227"/>
    <lineage>
        <taxon>Eukaryota</taxon>
        <taxon>Metazoa</taxon>
        <taxon>Ecdysozoa</taxon>
        <taxon>Arthropoda</taxon>
        <taxon>Hexapoda</taxon>
        <taxon>Insecta</taxon>
        <taxon>Pterygota</taxon>
        <taxon>Neoptera</taxon>
        <taxon>Endopterygota</taxon>
        <taxon>Diptera</taxon>
        <taxon>Brachycera</taxon>
        <taxon>Muscomorpha</taxon>
        <taxon>Ephydroidea</taxon>
        <taxon>Drosophilidae</taxon>
        <taxon>Drosophila</taxon>
        <taxon>Sophophora</taxon>
    </lineage>
</organism>
<comment type="function">
    <text evidence="1 2 3 4">Component of the transcription regulatory complex SAGA, a multiprotein complex that activates transcription by remodeling chromatin and mediating histone acetylation and deubiquitination (PubMed:16980620, PubMed:21764853, PubMed:24493646, PubMed:30559249). The SAGA complex predominantly acetylates histone H3 (PubMed:30559249).</text>
</comment>
<comment type="subunit">
    <text evidence="1 2 3 4">Component of the Spt-Ada-Gcn5 acetyltransferase (SAGA) complex consisting of wda/Taf5L, Saf6, Taf9, Taf10b, Taf12, Ada1, Spt3, Spt7, Spt20, Sf3b3, Sf3b5, Nipped-A/Tra1, a histone acetyltransferase (HAT) module made up of Gcn5, Ada2b (Isoform B), Ada3 and Sgf29, and a deubiquitinase (DUB) module made up of not/nonstop, Sgf11 and e(y)2 tethered to SAGA by Atxn7 (PubMed:16980620, PubMed:21764853, PubMed:24493646, PubMed:30559249). Not a component of the Ada2a-containing ATAC complex (PubMed:16980620).</text>
</comment>
<comment type="subcellular location">
    <subcellularLocation>
        <location evidence="3">Nucleus</location>
    </subcellularLocation>
</comment>
<comment type="developmental stage">
    <text evidence="2">Expressed in embryonic muscle and neuronal cells (at protein level).</text>
</comment>
<comment type="miscellaneous">
    <text evidence="6">One of a pair of almost identical proteins differing at a single amino acid position expressed from genes (Ada1-1 and Ada1-2) resulting from a gene duplication.</text>
</comment>
<comment type="similarity">
    <text evidence="6">Belongs to the TADA1 family.</text>
</comment>
<gene>
    <name evidence="9" type="primary">Ada1-2</name>
    <name evidence="5" type="synonym">Ada1</name>
    <name evidence="7" type="synonym">Ada2</name>
    <name evidence="9" type="ORF">CG31866</name>
</gene>
<sequence>MLTDRVLATKEALVVALGDNWERYRANMKNWFRSRWTKEEFDAESRKILTPDKLHLHNQFLLALLNKIDAFAPLENPPAVQTSSSSGNRSKRRKRSSRTFAERLNFELSDVLDFVAEDNMQIIRPPTTIGIPSDQQQQQLQSQRYCAQELFLPDAGFIMGRFLIGAWEIGLVSVDDNVAEYVAMAVQVLLKDLLSAIIKKRKHYKTSGEGNFYYDVGAPLRDPSLRNTVTRQKVDDTPLELDKELNTANFMRRQNDDVTFLSACEEVQPTERTVITLKDCQLALRDRNLIGSHAVYSINMERLNMMMH</sequence>
<proteinExistence type="evidence at protein level"/>